<feature type="chain" id="PRO_0000223668" description="Protein phosphatase methylesterase 1">
    <location>
        <begin position="1"/>
        <end position="454"/>
    </location>
</feature>
<feature type="region of interest" description="Disordered" evidence="2">
    <location>
        <begin position="1"/>
        <end position="69"/>
    </location>
</feature>
<feature type="region of interest" description="Disordered" evidence="2">
    <location>
        <begin position="181"/>
        <end position="203"/>
    </location>
</feature>
<feature type="compositionally biased region" description="Low complexity" evidence="2">
    <location>
        <begin position="44"/>
        <end position="69"/>
    </location>
</feature>
<feature type="active site" evidence="1">
    <location>
        <position position="240"/>
    </location>
</feature>
<feature type="active site" evidence="1">
    <location>
        <position position="266"/>
    </location>
</feature>
<feature type="active site" evidence="1">
    <location>
        <position position="412"/>
    </location>
</feature>
<comment type="function">
    <text evidence="1">Demethylates proteins that have been reversibly carboxymethylated. Demethylates the phosphatase PP2A catalytic subunit (By similarity).</text>
</comment>
<comment type="catalytic activity">
    <reaction>
        <text>[phosphatase 2A protein]-C-terminal L-leucine methyl ester + H2O = [phosphatase 2A protein]-C-terminal L-leucine + methanol + H(+)</text>
        <dbReference type="Rhea" id="RHEA:48548"/>
        <dbReference type="Rhea" id="RHEA-COMP:12134"/>
        <dbReference type="Rhea" id="RHEA-COMP:12135"/>
        <dbReference type="ChEBI" id="CHEBI:15377"/>
        <dbReference type="ChEBI" id="CHEBI:15378"/>
        <dbReference type="ChEBI" id="CHEBI:17790"/>
        <dbReference type="ChEBI" id="CHEBI:90516"/>
        <dbReference type="ChEBI" id="CHEBI:90517"/>
        <dbReference type="EC" id="3.1.1.89"/>
    </reaction>
</comment>
<comment type="similarity">
    <text evidence="3">Belongs to the AB hydrolase superfamily.</text>
</comment>
<comment type="sequence caution" evidence="3">
    <conflict type="erroneous initiation">
        <sequence resource="EMBL-CDS" id="EAA35911"/>
    </conflict>
    <text>Extended N-terminus.</text>
</comment>
<dbReference type="EC" id="3.1.1.89"/>
<dbReference type="EMBL" id="BX842629">
    <property type="protein sequence ID" value="CAE76324.1"/>
    <property type="molecule type" value="Genomic_DNA"/>
</dbReference>
<dbReference type="EMBL" id="CM002236">
    <property type="protein sequence ID" value="EAA35911.2"/>
    <property type="status" value="ALT_INIT"/>
    <property type="molecule type" value="Genomic_DNA"/>
</dbReference>
<dbReference type="RefSeq" id="XP_965147.2">
    <property type="nucleotide sequence ID" value="XM_960054.2"/>
</dbReference>
<dbReference type="SMR" id="Q7SGG8"/>
<dbReference type="FunCoup" id="Q7SGG8">
    <property type="interactions" value="829"/>
</dbReference>
<dbReference type="STRING" id="367110.Q7SGG8"/>
<dbReference type="ESTHER" id="neucr-ppme1">
    <property type="family name" value="PPase_methylesterase_euk"/>
</dbReference>
<dbReference type="PaxDb" id="5141-EFNCRP00000000641"/>
<dbReference type="EnsemblFungi" id="EAA35911">
    <property type="protein sequence ID" value="EAA35911"/>
    <property type="gene ID" value="NCU00954"/>
</dbReference>
<dbReference type="GeneID" id="3881315"/>
<dbReference type="KEGG" id="ncr:NCU00954"/>
<dbReference type="HOGENOM" id="CLU_024818_3_0_1"/>
<dbReference type="InParanoid" id="Q7SGG8"/>
<dbReference type="OrthoDB" id="194865at2759"/>
<dbReference type="Proteomes" id="UP000001805">
    <property type="component" value="Chromosome 1, Linkage Group I"/>
</dbReference>
<dbReference type="GO" id="GO:0051722">
    <property type="term" value="F:protein C-terminal methylesterase activity"/>
    <property type="evidence" value="ECO:0000318"/>
    <property type="project" value="GO_Central"/>
</dbReference>
<dbReference type="FunFam" id="3.40.50.1820:FF:000186">
    <property type="entry name" value="Protein phosphatase methylesterase 1"/>
    <property type="match status" value="1"/>
</dbReference>
<dbReference type="Gene3D" id="3.40.50.1820">
    <property type="entry name" value="alpha/beta hydrolase"/>
    <property type="match status" value="1"/>
</dbReference>
<dbReference type="InterPro" id="IPR000073">
    <property type="entry name" value="AB_hydrolase_1"/>
</dbReference>
<dbReference type="InterPro" id="IPR029058">
    <property type="entry name" value="AB_hydrolase_fold"/>
</dbReference>
<dbReference type="InterPro" id="IPR016812">
    <property type="entry name" value="PPase_methylesterase_euk"/>
</dbReference>
<dbReference type="PANTHER" id="PTHR14189:SF0">
    <property type="entry name" value="PROTEIN PHOSPHATASE METHYLESTERASE 1"/>
    <property type="match status" value="1"/>
</dbReference>
<dbReference type="PANTHER" id="PTHR14189">
    <property type="entry name" value="PROTEIN PHOSPHATASE METHYLESTERASE-1 RELATED"/>
    <property type="match status" value="1"/>
</dbReference>
<dbReference type="Pfam" id="PF12697">
    <property type="entry name" value="Abhydrolase_6"/>
    <property type="match status" value="1"/>
</dbReference>
<dbReference type="PIRSF" id="PIRSF022950">
    <property type="entry name" value="PPase_methylesterase_euk"/>
    <property type="match status" value="1"/>
</dbReference>
<dbReference type="SUPFAM" id="SSF53474">
    <property type="entry name" value="alpha/beta-Hydrolases"/>
    <property type="match status" value="1"/>
</dbReference>
<protein>
    <recommendedName>
        <fullName>Protein phosphatase methylesterase 1</fullName>
        <shortName>PME-1</shortName>
        <ecNumber>3.1.1.89</ecNumber>
    </recommendedName>
    <alternativeName>
        <fullName>Pectin methylesterase 1</fullName>
    </alternativeName>
</protein>
<name>PPME1_NEUCR</name>
<sequence length="454" mass="48955">MSELQKQWAKARLGSQALGQPPAEMPITTTMPEFNEADEDKEMAGPSPGGFPFDDDSSSASSVSSTGTVIPSPGRALFARPQGFASRSMDPIPWTTYFERELFLKEEAGPDSGSRTSNKNKPTSITYHAYLTSPVGKGPLFVTHHGAGSSGLSFAVLSSEIRKRLPNAGILSLDARGHGSTTVTAASSVPGEGDETTGQAPPPLDLSLSTLASDLFTVIQLTRTAMHWPELPPIILVGHSLGGAVVTELAKSYRLGPSLLGYAVLDVVEGCAMDALQSMQTYLSTRPQGFASLKDGIDWHVRSRTIRNSTSARTSVPGLLAPVEELQRPELQQLPRGVAGTQGTAKPWRWKTDLAATQPFWEDWFVGLSKKFLEARGGKMLLLAGTDRLDTELTIGQMQGKYALQVFPEAGHFIHEDLPEKTAIALVDFHRRNDRSQLVLPPKVSDLLAQGKKV</sequence>
<organism>
    <name type="scientific">Neurospora crassa (strain ATCC 24698 / 74-OR23-1A / CBS 708.71 / DSM 1257 / FGSC 987)</name>
    <dbReference type="NCBI Taxonomy" id="367110"/>
    <lineage>
        <taxon>Eukaryota</taxon>
        <taxon>Fungi</taxon>
        <taxon>Dikarya</taxon>
        <taxon>Ascomycota</taxon>
        <taxon>Pezizomycotina</taxon>
        <taxon>Sordariomycetes</taxon>
        <taxon>Sordariomycetidae</taxon>
        <taxon>Sordariales</taxon>
        <taxon>Sordariaceae</taxon>
        <taxon>Neurospora</taxon>
    </lineage>
</organism>
<proteinExistence type="inferred from homology"/>
<gene>
    <name type="primary">pme-1</name>
    <name type="synonym">ppe1</name>
    <name type="ORF">B20J13.050</name>
    <name type="ORF">NCU00954</name>
</gene>
<accession>Q7SGG8</accession>
<keyword id="KW-0378">Hydrolase</keyword>
<keyword id="KW-1185">Reference proteome</keyword>
<keyword id="KW-0719">Serine esterase</keyword>
<reference key="1">
    <citation type="journal article" date="2003" name="Nucleic Acids Res.">
        <title>What's in the genome of a filamentous fungus? Analysis of the Neurospora genome sequence.</title>
        <authorList>
            <person name="Mannhaupt G."/>
            <person name="Montrone C."/>
            <person name="Haase D."/>
            <person name="Mewes H.-W."/>
            <person name="Aign V."/>
            <person name="Hoheisel J.D."/>
            <person name="Fartmann B."/>
            <person name="Nyakatura G."/>
            <person name="Kempken F."/>
            <person name="Maier J."/>
            <person name="Schulte U."/>
        </authorList>
    </citation>
    <scope>NUCLEOTIDE SEQUENCE [LARGE SCALE GENOMIC DNA]</scope>
    <source>
        <strain>ATCC 24698 / 74-OR23-1A / CBS 708.71 / DSM 1257 / FGSC 987</strain>
    </source>
</reference>
<reference key="2">
    <citation type="journal article" date="2003" name="Nature">
        <title>The genome sequence of the filamentous fungus Neurospora crassa.</title>
        <authorList>
            <person name="Galagan J.E."/>
            <person name="Calvo S.E."/>
            <person name="Borkovich K.A."/>
            <person name="Selker E.U."/>
            <person name="Read N.D."/>
            <person name="Jaffe D.B."/>
            <person name="FitzHugh W."/>
            <person name="Ma L.-J."/>
            <person name="Smirnov S."/>
            <person name="Purcell S."/>
            <person name="Rehman B."/>
            <person name="Elkins T."/>
            <person name="Engels R."/>
            <person name="Wang S."/>
            <person name="Nielsen C.B."/>
            <person name="Butler J."/>
            <person name="Endrizzi M."/>
            <person name="Qui D."/>
            <person name="Ianakiev P."/>
            <person name="Bell-Pedersen D."/>
            <person name="Nelson M.A."/>
            <person name="Werner-Washburne M."/>
            <person name="Selitrennikoff C.P."/>
            <person name="Kinsey J.A."/>
            <person name="Braun E.L."/>
            <person name="Zelter A."/>
            <person name="Schulte U."/>
            <person name="Kothe G.O."/>
            <person name="Jedd G."/>
            <person name="Mewes H.-W."/>
            <person name="Staben C."/>
            <person name="Marcotte E."/>
            <person name="Greenberg D."/>
            <person name="Roy A."/>
            <person name="Foley K."/>
            <person name="Naylor J."/>
            <person name="Stange-Thomann N."/>
            <person name="Barrett R."/>
            <person name="Gnerre S."/>
            <person name="Kamal M."/>
            <person name="Kamvysselis M."/>
            <person name="Mauceli E.W."/>
            <person name="Bielke C."/>
            <person name="Rudd S."/>
            <person name="Frishman D."/>
            <person name="Krystofova S."/>
            <person name="Rasmussen C."/>
            <person name="Metzenberg R.L."/>
            <person name="Perkins D.D."/>
            <person name="Kroken S."/>
            <person name="Cogoni C."/>
            <person name="Macino G."/>
            <person name="Catcheside D.E.A."/>
            <person name="Li W."/>
            <person name="Pratt R.J."/>
            <person name="Osmani S.A."/>
            <person name="DeSouza C.P.C."/>
            <person name="Glass N.L."/>
            <person name="Orbach M.J."/>
            <person name="Berglund J.A."/>
            <person name="Voelker R."/>
            <person name="Yarden O."/>
            <person name="Plamann M."/>
            <person name="Seiler S."/>
            <person name="Dunlap J.C."/>
            <person name="Radford A."/>
            <person name="Aramayo R."/>
            <person name="Natvig D.O."/>
            <person name="Alex L.A."/>
            <person name="Mannhaupt G."/>
            <person name="Ebbole D.J."/>
            <person name="Freitag M."/>
            <person name="Paulsen I."/>
            <person name="Sachs M.S."/>
            <person name="Lander E.S."/>
            <person name="Nusbaum C."/>
            <person name="Birren B.W."/>
        </authorList>
    </citation>
    <scope>NUCLEOTIDE SEQUENCE [LARGE SCALE GENOMIC DNA]</scope>
    <source>
        <strain>ATCC 24698 / 74-OR23-1A / CBS 708.71 / DSM 1257 / FGSC 987</strain>
    </source>
</reference>
<evidence type="ECO:0000250" key="1"/>
<evidence type="ECO:0000256" key="2">
    <source>
        <dbReference type="SAM" id="MobiDB-lite"/>
    </source>
</evidence>
<evidence type="ECO:0000305" key="3"/>